<feature type="chain" id="PRO_1000018476" description="Indole-3-glycerol phosphate synthase">
    <location>
        <begin position="1"/>
        <end position="262"/>
    </location>
</feature>
<sequence length="262" mass="28275">MSDILNKIIATKREEVAAARLAKPLAIVEAEAIAQPAPRDFVGAIRNKIANDRPAVIAEIKKASPSKGIIRPDFQPADIARSYEQHGAACLSVLTDRQYFQGCPEYLQSARAACALPVLRKDFMVDAYQVAEARAMGADAILLIAAALTLEEMQALETQASAYGMAVLVEVHNGEELDAALQLKTPLLGINNRNLRTFAVTLETTLGLLSRIPAGRIVVTESGILKPEEVALMRTNKVNAFLVGEAFMRVPEPGAELARLFA</sequence>
<evidence type="ECO:0000255" key="1">
    <source>
        <dbReference type="HAMAP-Rule" id="MF_00134"/>
    </source>
</evidence>
<organism>
    <name type="scientific">Dechloromonas aromatica (strain RCB)</name>
    <dbReference type="NCBI Taxonomy" id="159087"/>
    <lineage>
        <taxon>Bacteria</taxon>
        <taxon>Pseudomonadati</taxon>
        <taxon>Pseudomonadota</taxon>
        <taxon>Betaproteobacteria</taxon>
        <taxon>Rhodocyclales</taxon>
        <taxon>Azonexaceae</taxon>
        <taxon>Dechloromonas</taxon>
    </lineage>
</organism>
<name>TRPC_DECAR</name>
<comment type="catalytic activity">
    <reaction evidence="1">
        <text>1-(2-carboxyphenylamino)-1-deoxy-D-ribulose 5-phosphate + H(+) = (1S,2R)-1-C-(indol-3-yl)glycerol 3-phosphate + CO2 + H2O</text>
        <dbReference type="Rhea" id="RHEA:23476"/>
        <dbReference type="ChEBI" id="CHEBI:15377"/>
        <dbReference type="ChEBI" id="CHEBI:15378"/>
        <dbReference type="ChEBI" id="CHEBI:16526"/>
        <dbReference type="ChEBI" id="CHEBI:58613"/>
        <dbReference type="ChEBI" id="CHEBI:58866"/>
        <dbReference type="EC" id="4.1.1.48"/>
    </reaction>
</comment>
<comment type="pathway">
    <text evidence="1">Amino-acid biosynthesis; L-tryptophan biosynthesis; L-tryptophan from chorismate: step 4/5.</text>
</comment>
<comment type="similarity">
    <text evidence="1">Belongs to the TrpC family.</text>
</comment>
<dbReference type="EC" id="4.1.1.48" evidence="1"/>
<dbReference type="EMBL" id="CP000089">
    <property type="protein sequence ID" value="AAZ48204.1"/>
    <property type="molecule type" value="Genomic_DNA"/>
</dbReference>
<dbReference type="SMR" id="Q47AC7"/>
<dbReference type="STRING" id="159087.Daro_3475"/>
<dbReference type="KEGG" id="dar:Daro_3475"/>
<dbReference type="eggNOG" id="COG0134">
    <property type="taxonomic scope" value="Bacteria"/>
</dbReference>
<dbReference type="HOGENOM" id="CLU_034247_2_0_4"/>
<dbReference type="OrthoDB" id="9804217at2"/>
<dbReference type="UniPathway" id="UPA00035">
    <property type="reaction ID" value="UER00043"/>
</dbReference>
<dbReference type="GO" id="GO:0004425">
    <property type="term" value="F:indole-3-glycerol-phosphate synthase activity"/>
    <property type="evidence" value="ECO:0007669"/>
    <property type="project" value="UniProtKB-UniRule"/>
</dbReference>
<dbReference type="GO" id="GO:0004640">
    <property type="term" value="F:phosphoribosylanthranilate isomerase activity"/>
    <property type="evidence" value="ECO:0007669"/>
    <property type="project" value="TreeGrafter"/>
</dbReference>
<dbReference type="GO" id="GO:0000162">
    <property type="term" value="P:L-tryptophan biosynthetic process"/>
    <property type="evidence" value="ECO:0007669"/>
    <property type="project" value="UniProtKB-UniRule"/>
</dbReference>
<dbReference type="CDD" id="cd00331">
    <property type="entry name" value="IGPS"/>
    <property type="match status" value="1"/>
</dbReference>
<dbReference type="FunFam" id="3.20.20.70:FF:000024">
    <property type="entry name" value="Indole-3-glycerol phosphate synthase"/>
    <property type="match status" value="1"/>
</dbReference>
<dbReference type="Gene3D" id="3.20.20.70">
    <property type="entry name" value="Aldolase class I"/>
    <property type="match status" value="1"/>
</dbReference>
<dbReference type="HAMAP" id="MF_00134_B">
    <property type="entry name" value="IGPS_B"/>
    <property type="match status" value="1"/>
</dbReference>
<dbReference type="InterPro" id="IPR013785">
    <property type="entry name" value="Aldolase_TIM"/>
</dbReference>
<dbReference type="InterPro" id="IPR045186">
    <property type="entry name" value="Indole-3-glycerol_P_synth"/>
</dbReference>
<dbReference type="InterPro" id="IPR013798">
    <property type="entry name" value="Indole-3-glycerol_P_synth_dom"/>
</dbReference>
<dbReference type="InterPro" id="IPR001468">
    <property type="entry name" value="Indole-3-GlycerolPSynthase_CS"/>
</dbReference>
<dbReference type="InterPro" id="IPR011060">
    <property type="entry name" value="RibuloseP-bd_barrel"/>
</dbReference>
<dbReference type="NCBIfam" id="NF001370">
    <property type="entry name" value="PRK00278.1-2"/>
    <property type="match status" value="1"/>
</dbReference>
<dbReference type="NCBIfam" id="NF001373">
    <property type="entry name" value="PRK00278.1-6"/>
    <property type="match status" value="1"/>
</dbReference>
<dbReference type="NCBIfam" id="NF001377">
    <property type="entry name" value="PRK00278.2-4"/>
    <property type="match status" value="1"/>
</dbReference>
<dbReference type="PANTHER" id="PTHR22854:SF2">
    <property type="entry name" value="INDOLE-3-GLYCEROL-PHOSPHATE SYNTHASE"/>
    <property type="match status" value="1"/>
</dbReference>
<dbReference type="PANTHER" id="PTHR22854">
    <property type="entry name" value="TRYPTOPHAN BIOSYNTHESIS PROTEIN"/>
    <property type="match status" value="1"/>
</dbReference>
<dbReference type="Pfam" id="PF00218">
    <property type="entry name" value="IGPS"/>
    <property type="match status" value="1"/>
</dbReference>
<dbReference type="SUPFAM" id="SSF51366">
    <property type="entry name" value="Ribulose-phoshate binding barrel"/>
    <property type="match status" value="1"/>
</dbReference>
<dbReference type="PROSITE" id="PS00614">
    <property type="entry name" value="IGPS"/>
    <property type="match status" value="1"/>
</dbReference>
<proteinExistence type="inferred from homology"/>
<protein>
    <recommendedName>
        <fullName evidence="1">Indole-3-glycerol phosphate synthase</fullName>
        <shortName evidence="1">IGPS</shortName>
        <ecNumber evidence="1">4.1.1.48</ecNumber>
    </recommendedName>
</protein>
<gene>
    <name evidence="1" type="primary">trpC</name>
    <name type="ordered locus">Daro_3475</name>
</gene>
<reference key="1">
    <citation type="journal article" date="2009" name="BMC Genomics">
        <title>Metabolic analysis of the soil microbe Dechloromonas aromatica str. RCB: indications of a surprisingly complex life-style and cryptic anaerobic pathways for aromatic degradation.</title>
        <authorList>
            <person name="Salinero K.K."/>
            <person name="Keller K."/>
            <person name="Feil W.S."/>
            <person name="Feil H."/>
            <person name="Trong S."/>
            <person name="Di Bartolo G."/>
            <person name="Lapidus A."/>
        </authorList>
    </citation>
    <scope>NUCLEOTIDE SEQUENCE [LARGE SCALE GENOMIC DNA]</scope>
    <source>
        <strain>RCB</strain>
    </source>
</reference>
<keyword id="KW-0028">Amino-acid biosynthesis</keyword>
<keyword id="KW-0057">Aromatic amino acid biosynthesis</keyword>
<keyword id="KW-0210">Decarboxylase</keyword>
<keyword id="KW-0456">Lyase</keyword>
<keyword id="KW-0822">Tryptophan biosynthesis</keyword>
<accession>Q47AC7</accession>